<keyword id="KW-0012">Acyltransferase</keyword>
<keyword id="KW-0963">Cytoplasm</keyword>
<keyword id="KW-0408">Iron</keyword>
<keyword id="KW-0479">Metal-binding</keyword>
<keyword id="KW-1185">Reference proteome</keyword>
<keyword id="KW-0808">Transferase</keyword>
<keyword id="KW-0819">tRNA processing</keyword>
<sequence>MYYKVILGIESSCDDLSIAIAIDNKIVTTKTKSSSSVHANYGGVVPEIAARYHEEILHQTLNEALTEANLTINKIDLITYTENPGLLNCLHVAKVFANTLGYLLKIPAQGINHLYGHIFSPMIDDGDCLYQKSDLIYPALGIVVSGGHTAIYDVQSPSKITLLDETLDDAIGEVYDKVGRALGLQYPAGAKIDQLYNPEQAETVEFLKTNKLSAFSYSGFKSAVLRYIELNKNQPDFNLVQAVSSFQKFIIDDFIDRIKNVINKADSKYQTILLGGGVSANSYLRSELKELAIKTLVPKPIYSGDNAAMIINYAQYLLNE</sequence>
<protein>
    <recommendedName>
        <fullName evidence="1">tRNA N6-adenosine threonylcarbamoyltransferase</fullName>
        <ecNumber evidence="1">2.3.1.234</ecNumber>
    </recommendedName>
    <alternativeName>
        <fullName evidence="1">N6-L-threonylcarbamoyladenine synthase</fullName>
        <shortName evidence="1">t(6)A synthase</shortName>
    </alternativeName>
    <alternativeName>
        <fullName evidence="1">t(6)A37 threonylcarbamoyladenosine biosynthesis protein TsaD</fullName>
    </alternativeName>
    <alternativeName>
        <fullName evidence="1">tRNA threonylcarbamoyladenosine biosynthesis protein TsaD</fullName>
    </alternativeName>
</protein>
<dbReference type="EC" id="2.3.1.234" evidence="1"/>
<dbReference type="EMBL" id="AE015450">
    <property type="protein sequence ID" value="AAP56815.2"/>
    <property type="molecule type" value="Genomic_DNA"/>
</dbReference>
<dbReference type="RefSeq" id="WP_011113714.1">
    <property type="nucleotide sequence ID" value="NC_004829.2"/>
</dbReference>
<dbReference type="SMR" id="Q7NB15"/>
<dbReference type="GeneID" id="93510295"/>
<dbReference type="KEGG" id="mga:MGA_0129"/>
<dbReference type="PATRIC" id="fig|233150.7.peg.523"/>
<dbReference type="HOGENOM" id="CLU_023208_0_1_14"/>
<dbReference type="OrthoDB" id="9806197at2"/>
<dbReference type="Proteomes" id="UP000001418">
    <property type="component" value="Chromosome"/>
</dbReference>
<dbReference type="GO" id="GO:0005737">
    <property type="term" value="C:cytoplasm"/>
    <property type="evidence" value="ECO:0007669"/>
    <property type="project" value="UniProtKB-SubCell"/>
</dbReference>
<dbReference type="GO" id="GO:0005506">
    <property type="term" value="F:iron ion binding"/>
    <property type="evidence" value="ECO:0007669"/>
    <property type="project" value="UniProtKB-UniRule"/>
</dbReference>
<dbReference type="GO" id="GO:0061711">
    <property type="term" value="F:N(6)-L-threonylcarbamoyladenine synthase activity"/>
    <property type="evidence" value="ECO:0007669"/>
    <property type="project" value="UniProtKB-EC"/>
</dbReference>
<dbReference type="GO" id="GO:0002949">
    <property type="term" value="P:tRNA threonylcarbamoyladenosine modification"/>
    <property type="evidence" value="ECO:0007669"/>
    <property type="project" value="UniProtKB-UniRule"/>
</dbReference>
<dbReference type="Gene3D" id="3.30.420.40">
    <property type="match status" value="2"/>
</dbReference>
<dbReference type="HAMAP" id="MF_01445">
    <property type="entry name" value="TsaD"/>
    <property type="match status" value="1"/>
</dbReference>
<dbReference type="InterPro" id="IPR043129">
    <property type="entry name" value="ATPase_NBD"/>
</dbReference>
<dbReference type="InterPro" id="IPR000905">
    <property type="entry name" value="Gcp-like_dom"/>
</dbReference>
<dbReference type="InterPro" id="IPR017861">
    <property type="entry name" value="KAE1/TsaD"/>
</dbReference>
<dbReference type="InterPro" id="IPR022450">
    <property type="entry name" value="TsaD"/>
</dbReference>
<dbReference type="NCBIfam" id="TIGR00329">
    <property type="entry name" value="gcp_kae1"/>
    <property type="match status" value="1"/>
</dbReference>
<dbReference type="NCBIfam" id="TIGR03723">
    <property type="entry name" value="T6A_TsaD_YgjD"/>
    <property type="match status" value="1"/>
</dbReference>
<dbReference type="PANTHER" id="PTHR11735">
    <property type="entry name" value="TRNA N6-ADENOSINE THREONYLCARBAMOYLTRANSFERASE"/>
    <property type="match status" value="1"/>
</dbReference>
<dbReference type="PANTHER" id="PTHR11735:SF6">
    <property type="entry name" value="TRNA N6-ADENOSINE THREONYLCARBAMOYLTRANSFERASE, MITOCHONDRIAL"/>
    <property type="match status" value="1"/>
</dbReference>
<dbReference type="Pfam" id="PF00814">
    <property type="entry name" value="TsaD"/>
    <property type="match status" value="1"/>
</dbReference>
<dbReference type="PRINTS" id="PR00789">
    <property type="entry name" value="OSIALOPTASE"/>
</dbReference>
<dbReference type="SUPFAM" id="SSF53067">
    <property type="entry name" value="Actin-like ATPase domain"/>
    <property type="match status" value="2"/>
</dbReference>
<organism>
    <name type="scientific">Mycoplasmoides gallisepticum (strain R(low / passage 15 / clone 2))</name>
    <name type="common">Mycoplasma gallisepticum</name>
    <dbReference type="NCBI Taxonomy" id="710127"/>
    <lineage>
        <taxon>Bacteria</taxon>
        <taxon>Bacillati</taxon>
        <taxon>Mycoplasmatota</taxon>
        <taxon>Mycoplasmoidales</taxon>
        <taxon>Mycoplasmoidaceae</taxon>
        <taxon>Mycoplasmoides</taxon>
    </lineage>
</organism>
<accession>Q7NB15</accession>
<evidence type="ECO:0000255" key="1">
    <source>
        <dbReference type="HAMAP-Rule" id="MF_01445"/>
    </source>
</evidence>
<gene>
    <name evidence="1" type="primary">tsaD</name>
    <name type="synonym">gcp</name>
    <name type="ordered locus">MYCGA4650</name>
    <name type="ORF">MGA_0129</name>
</gene>
<comment type="function">
    <text evidence="1">Required for the formation of a threonylcarbamoyl group on adenosine at position 37 (t(6)A37) in tRNAs that read codons beginning with adenine. Is involved in the transfer of the threonylcarbamoyl moiety of threonylcarbamoyl-AMP (TC-AMP) to the N6 group of A37, together with TsaE and TsaB. TsaD likely plays a direct catalytic role in this reaction.</text>
</comment>
<comment type="catalytic activity">
    <reaction evidence="1">
        <text>L-threonylcarbamoyladenylate + adenosine(37) in tRNA = N(6)-L-threonylcarbamoyladenosine(37) in tRNA + AMP + H(+)</text>
        <dbReference type="Rhea" id="RHEA:37059"/>
        <dbReference type="Rhea" id="RHEA-COMP:10162"/>
        <dbReference type="Rhea" id="RHEA-COMP:10163"/>
        <dbReference type="ChEBI" id="CHEBI:15378"/>
        <dbReference type="ChEBI" id="CHEBI:73682"/>
        <dbReference type="ChEBI" id="CHEBI:74411"/>
        <dbReference type="ChEBI" id="CHEBI:74418"/>
        <dbReference type="ChEBI" id="CHEBI:456215"/>
        <dbReference type="EC" id="2.3.1.234"/>
    </reaction>
</comment>
<comment type="cofactor">
    <cofactor evidence="1">
        <name>Fe(2+)</name>
        <dbReference type="ChEBI" id="CHEBI:29033"/>
    </cofactor>
    <text evidence="1">Binds 1 Fe(2+) ion per subunit.</text>
</comment>
<comment type="subcellular location">
    <subcellularLocation>
        <location evidence="1">Cytoplasm</location>
    </subcellularLocation>
</comment>
<comment type="similarity">
    <text evidence="1">Belongs to the KAE1 / TsaD family.</text>
</comment>
<proteinExistence type="inferred from homology"/>
<feature type="chain" id="PRO_0000303439" description="tRNA N6-adenosine threonylcarbamoyltransferase">
    <location>
        <begin position="1"/>
        <end position="320"/>
    </location>
</feature>
<feature type="binding site" evidence="1">
    <location>
        <position position="113"/>
    </location>
    <ligand>
        <name>Fe cation</name>
        <dbReference type="ChEBI" id="CHEBI:24875"/>
    </ligand>
</feature>
<feature type="binding site" evidence="1">
    <location>
        <position position="117"/>
    </location>
    <ligand>
        <name>Fe cation</name>
        <dbReference type="ChEBI" id="CHEBI:24875"/>
    </ligand>
</feature>
<feature type="binding site" evidence="1">
    <location>
        <begin position="143"/>
        <end position="147"/>
    </location>
    <ligand>
        <name>substrate</name>
    </ligand>
</feature>
<feature type="binding site" evidence="1">
    <location>
        <position position="176"/>
    </location>
    <ligand>
        <name>substrate</name>
    </ligand>
</feature>
<feature type="binding site" evidence="1">
    <location>
        <position position="189"/>
    </location>
    <ligand>
        <name>substrate</name>
    </ligand>
</feature>
<feature type="binding site" evidence="1">
    <location>
        <position position="193"/>
    </location>
    <ligand>
        <name>substrate</name>
    </ligand>
</feature>
<feature type="binding site" evidence="1">
    <location>
        <position position="281"/>
    </location>
    <ligand>
        <name>substrate</name>
    </ligand>
</feature>
<feature type="binding site" evidence="1">
    <location>
        <position position="305"/>
    </location>
    <ligand>
        <name>Fe cation</name>
        <dbReference type="ChEBI" id="CHEBI:24875"/>
    </ligand>
</feature>
<name>TSAD_MYCGA</name>
<reference key="1">
    <citation type="journal article" date="2003" name="Microbiology">
        <title>The complete genome sequence of the avian pathogen Mycoplasma gallisepticum strain R(low).</title>
        <authorList>
            <person name="Papazisi L."/>
            <person name="Gorton T.S."/>
            <person name="Kutish G."/>
            <person name="Markham P.F."/>
            <person name="Browning G.F."/>
            <person name="Nguyen D.K."/>
            <person name="Swartzell S."/>
            <person name="Madan A."/>
            <person name="Mahairas G."/>
            <person name="Geary S.J."/>
        </authorList>
    </citation>
    <scope>NUCLEOTIDE SEQUENCE [LARGE SCALE GENOMIC DNA]</scope>
    <source>
        <strain>R(low / passage 15 / clone 2)</strain>
    </source>
</reference>